<sequence length="36" mass="4168">MLTLKLFVYTVVIFFVSLFIFGFLSNDPGRNPGREE</sequence>
<dbReference type="EMBL" id="AY916449">
    <property type="protein sequence ID" value="AAW82487.1"/>
    <property type="molecule type" value="Genomic_DNA"/>
</dbReference>
<dbReference type="RefSeq" id="YP_358560.1">
    <property type="nucleotide sequence ID" value="NC_007499.1"/>
</dbReference>
<dbReference type="SMR" id="Q3BAQ8"/>
<dbReference type="GeneID" id="3741660"/>
<dbReference type="GO" id="GO:0009535">
    <property type="term" value="C:chloroplast thylakoid membrane"/>
    <property type="evidence" value="ECO:0007669"/>
    <property type="project" value="UniProtKB-SubCell"/>
</dbReference>
<dbReference type="GO" id="GO:0009539">
    <property type="term" value="C:photosystem II reaction center"/>
    <property type="evidence" value="ECO:0007669"/>
    <property type="project" value="InterPro"/>
</dbReference>
<dbReference type="GO" id="GO:0015979">
    <property type="term" value="P:photosynthesis"/>
    <property type="evidence" value="ECO:0007669"/>
    <property type="project" value="UniProtKB-UniRule"/>
</dbReference>
<dbReference type="HAMAP" id="MF_01316">
    <property type="entry name" value="PSII_PsbI"/>
    <property type="match status" value="1"/>
</dbReference>
<dbReference type="InterPro" id="IPR003686">
    <property type="entry name" value="PSII_PsbI"/>
</dbReference>
<dbReference type="InterPro" id="IPR037271">
    <property type="entry name" value="PSII_PsbI_sf"/>
</dbReference>
<dbReference type="NCBIfam" id="NF002735">
    <property type="entry name" value="PRK02655.1"/>
    <property type="match status" value="1"/>
</dbReference>
<dbReference type="PANTHER" id="PTHR35772">
    <property type="entry name" value="PHOTOSYSTEM II REACTION CENTER PROTEIN I"/>
    <property type="match status" value="1"/>
</dbReference>
<dbReference type="PANTHER" id="PTHR35772:SF1">
    <property type="entry name" value="PHOTOSYSTEM II REACTION CENTER PROTEIN I"/>
    <property type="match status" value="1"/>
</dbReference>
<dbReference type="Pfam" id="PF02532">
    <property type="entry name" value="PsbI"/>
    <property type="match status" value="1"/>
</dbReference>
<dbReference type="SUPFAM" id="SSF161041">
    <property type="entry name" value="Photosystem II reaction center protein I, PsbI"/>
    <property type="match status" value="1"/>
</dbReference>
<name>PSBI_PHAAO</name>
<proteinExistence type="inferred from homology"/>
<organism>
    <name type="scientific">Phalaenopsis aphrodite subsp. formosana</name>
    <name type="common">Moth orchid</name>
    <dbReference type="NCBI Taxonomy" id="308872"/>
    <lineage>
        <taxon>Eukaryota</taxon>
        <taxon>Viridiplantae</taxon>
        <taxon>Streptophyta</taxon>
        <taxon>Embryophyta</taxon>
        <taxon>Tracheophyta</taxon>
        <taxon>Spermatophyta</taxon>
        <taxon>Magnoliopsida</taxon>
        <taxon>Liliopsida</taxon>
        <taxon>Asparagales</taxon>
        <taxon>Orchidaceae</taxon>
        <taxon>Epidendroideae</taxon>
        <taxon>Vandeae</taxon>
        <taxon>Aeridinae</taxon>
        <taxon>Phalaenopsis</taxon>
    </lineage>
</organism>
<accession>Q3BAQ8</accession>
<comment type="function">
    <text evidence="1">One of the components of the core complex of photosystem II (PSII), required for its stability and/or assembly. PSII is a light-driven water:plastoquinone oxidoreductase that uses light energy to abstract electrons from H(2)O, generating O(2) and a proton gradient subsequently used for ATP formation. It consists of a core antenna complex that captures photons, and an electron transfer chain that converts photonic excitation into a charge separation.</text>
</comment>
<comment type="subunit">
    <text evidence="1">PSII is composed of 1 copy each of membrane proteins PsbA, PsbB, PsbC, PsbD, PsbE, PsbF, PsbH, PsbI, PsbJ, PsbK, PsbL, PsbM, PsbT, PsbX, PsbY, PsbZ, Psb30/Ycf12, at least 3 peripheral proteins of the oxygen-evolving complex and a large number of cofactors. It forms dimeric complexes.</text>
</comment>
<comment type="subcellular location">
    <subcellularLocation>
        <location evidence="1">Plastid</location>
        <location evidence="1">Chloroplast thylakoid membrane</location>
        <topology evidence="1">Single-pass membrane protein</topology>
    </subcellularLocation>
</comment>
<comment type="similarity">
    <text evidence="1">Belongs to the PsbI family.</text>
</comment>
<reference key="1">
    <citation type="journal article" date="2006" name="Mol. Biol. Evol.">
        <title>The chloroplast genome of Phalaenopsis aphrodite (Orchidaceae): comparative analysis of evolutionary rate with that of grasses and its phylogenetic implications.</title>
        <authorList>
            <person name="Chang C.-C."/>
            <person name="Lin H.-C."/>
            <person name="Lin I.-P."/>
            <person name="Chow T.-Y."/>
            <person name="Chen H.-H."/>
            <person name="Chen W.-H."/>
            <person name="Cheng C.-H."/>
            <person name="Lin C.-Y."/>
            <person name="Liu S.-M."/>
            <person name="Chang C.-C."/>
            <person name="Chaw S.-M."/>
        </authorList>
    </citation>
    <scope>NUCLEOTIDE SEQUENCE [LARGE SCALE GENOMIC DNA]</scope>
    <source>
        <strain>cv. Taisugar TS-97</strain>
    </source>
</reference>
<gene>
    <name evidence="1" type="primary">psbI</name>
</gene>
<keyword id="KW-0150">Chloroplast</keyword>
<keyword id="KW-0472">Membrane</keyword>
<keyword id="KW-0602">Photosynthesis</keyword>
<keyword id="KW-0604">Photosystem II</keyword>
<keyword id="KW-0934">Plastid</keyword>
<keyword id="KW-0674">Reaction center</keyword>
<keyword id="KW-0793">Thylakoid</keyword>
<keyword id="KW-0812">Transmembrane</keyword>
<keyword id="KW-1133">Transmembrane helix</keyword>
<feature type="chain" id="PRO_0000275804" description="Photosystem II reaction center protein I">
    <location>
        <begin position="1"/>
        <end position="36"/>
    </location>
</feature>
<feature type="transmembrane region" description="Helical" evidence="1">
    <location>
        <begin position="4"/>
        <end position="24"/>
    </location>
</feature>
<protein>
    <recommendedName>
        <fullName evidence="1">Photosystem II reaction center protein I</fullName>
        <shortName evidence="1">PSII-I</shortName>
    </recommendedName>
    <alternativeName>
        <fullName evidence="1">PSII 4.8 kDa protein</fullName>
    </alternativeName>
</protein>
<evidence type="ECO:0000255" key="1">
    <source>
        <dbReference type="HAMAP-Rule" id="MF_01316"/>
    </source>
</evidence>
<geneLocation type="chloroplast"/>